<name>G6PI_SHEWM</name>
<sequence>MTRLTQSDTWQALSTHTQSLPHMRDLFEGDAQRFKTMSTSACGLFLDYSKNRATEETLSLLFKLAEDAQLQSKIAGMFNGEIINTTEKRAVLHTALRASPEQEILLDGVNIVQEVQETQQKMAEFVNAITSGQWKGYTGKRITDVVSIGIGGSFLGPKIVSQALRPYWTGELNCHFVANVDATSICEKLKTLDAETTLFIMSSKSFGTQETLTNTLSAKDWFLKQGGSQLDVAKHFVAVTSNVPKATEFGIDAENIFPMWDWVGGRYSLWSAIGLPIALLIGMDNFKALLQGAHEMDKHFLEAPLTENMPVIMGLFSLLYGNFHGAQSHVVLTYDHYLRGLPAYFQQLDMESNGKSVTLDGTDVDFSTGPVIWGGEGTNGQHAYHQLIHQGTALIPADFIMPLQSHNPLGEHHIQLASNCFGQTQALMQGRNYDEALNELSGSKLSADEQALIAKHKVMPGNKPSNTILMDKLTPSTLGSLIALYEHRTFVQGAIWDINSFDQWGVELGKSLGNDVLERLSADSDATSLDSSSNGLINMFRQGKI</sequence>
<gene>
    <name evidence="1" type="primary">pgi</name>
    <name type="ordered locus">Swoo_1279</name>
</gene>
<protein>
    <recommendedName>
        <fullName evidence="1">Glucose-6-phosphate isomerase</fullName>
        <shortName evidence="1">GPI</shortName>
        <ecNumber evidence="1">5.3.1.9</ecNumber>
    </recommendedName>
    <alternativeName>
        <fullName evidence="1">Phosphoglucose isomerase</fullName>
        <shortName evidence="1">PGI</shortName>
    </alternativeName>
    <alternativeName>
        <fullName evidence="1">Phosphohexose isomerase</fullName>
        <shortName evidence="1">PHI</shortName>
    </alternativeName>
</protein>
<organism>
    <name type="scientific">Shewanella woodyi (strain ATCC 51908 / MS32)</name>
    <dbReference type="NCBI Taxonomy" id="392500"/>
    <lineage>
        <taxon>Bacteria</taxon>
        <taxon>Pseudomonadati</taxon>
        <taxon>Pseudomonadota</taxon>
        <taxon>Gammaproteobacteria</taxon>
        <taxon>Alteromonadales</taxon>
        <taxon>Shewanellaceae</taxon>
        <taxon>Shewanella</taxon>
    </lineage>
</organism>
<comment type="function">
    <text evidence="1">Catalyzes the reversible isomerization of glucose-6-phosphate to fructose-6-phosphate.</text>
</comment>
<comment type="catalytic activity">
    <reaction evidence="1">
        <text>alpha-D-glucose 6-phosphate = beta-D-fructose 6-phosphate</text>
        <dbReference type="Rhea" id="RHEA:11816"/>
        <dbReference type="ChEBI" id="CHEBI:57634"/>
        <dbReference type="ChEBI" id="CHEBI:58225"/>
        <dbReference type="EC" id="5.3.1.9"/>
    </reaction>
</comment>
<comment type="pathway">
    <text evidence="1">Carbohydrate biosynthesis; gluconeogenesis.</text>
</comment>
<comment type="pathway">
    <text evidence="1">Carbohydrate degradation; glycolysis; D-glyceraldehyde 3-phosphate and glycerone phosphate from D-glucose: step 2/4.</text>
</comment>
<comment type="subcellular location">
    <subcellularLocation>
        <location evidence="1">Cytoplasm</location>
    </subcellularLocation>
</comment>
<comment type="similarity">
    <text evidence="1">Belongs to the GPI family.</text>
</comment>
<accession>B1KIS3</accession>
<evidence type="ECO:0000255" key="1">
    <source>
        <dbReference type="HAMAP-Rule" id="MF_00473"/>
    </source>
</evidence>
<dbReference type="EC" id="5.3.1.9" evidence="1"/>
<dbReference type="EMBL" id="CP000961">
    <property type="protein sequence ID" value="ACA85571.1"/>
    <property type="molecule type" value="Genomic_DNA"/>
</dbReference>
<dbReference type="RefSeq" id="WP_012323917.1">
    <property type="nucleotide sequence ID" value="NC_010506.1"/>
</dbReference>
<dbReference type="SMR" id="B1KIS3"/>
<dbReference type="STRING" id="392500.Swoo_1279"/>
<dbReference type="KEGG" id="swd:Swoo_1279"/>
<dbReference type="eggNOG" id="COG0166">
    <property type="taxonomic scope" value="Bacteria"/>
</dbReference>
<dbReference type="HOGENOM" id="CLU_017947_3_1_6"/>
<dbReference type="UniPathway" id="UPA00109">
    <property type="reaction ID" value="UER00181"/>
</dbReference>
<dbReference type="UniPathway" id="UPA00138"/>
<dbReference type="Proteomes" id="UP000002168">
    <property type="component" value="Chromosome"/>
</dbReference>
<dbReference type="GO" id="GO:0005829">
    <property type="term" value="C:cytosol"/>
    <property type="evidence" value="ECO:0007669"/>
    <property type="project" value="TreeGrafter"/>
</dbReference>
<dbReference type="GO" id="GO:0097367">
    <property type="term" value="F:carbohydrate derivative binding"/>
    <property type="evidence" value="ECO:0007669"/>
    <property type="project" value="InterPro"/>
</dbReference>
<dbReference type="GO" id="GO:0004347">
    <property type="term" value="F:glucose-6-phosphate isomerase activity"/>
    <property type="evidence" value="ECO:0007669"/>
    <property type="project" value="UniProtKB-UniRule"/>
</dbReference>
<dbReference type="GO" id="GO:0048029">
    <property type="term" value="F:monosaccharide binding"/>
    <property type="evidence" value="ECO:0007669"/>
    <property type="project" value="TreeGrafter"/>
</dbReference>
<dbReference type="GO" id="GO:0006094">
    <property type="term" value="P:gluconeogenesis"/>
    <property type="evidence" value="ECO:0007669"/>
    <property type="project" value="UniProtKB-UniRule"/>
</dbReference>
<dbReference type="GO" id="GO:0051156">
    <property type="term" value="P:glucose 6-phosphate metabolic process"/>
    <property type="evidence" value="ECO:0007669"/>
    <property type="project" value="TreeGrafter"/>
</dbReference>
<dbReference type="GO" id="GO:0006096">
    <property type="term" value="P:glycolytic process"/>
    <property type="evidence" value="ECO:0007669"/>
    <property type="project" value="UniProtKB-UniRule"/>
</dbReference>
<dbReference type="CDD" id="cd05015">
    <property type="entry name" value="SIS_PGI_1"/>
    <property type="match status" value="1"/>
</dbReference>
<dbReference type="CDD" id="cd05016">
    <property type="entry name" value="SIS_PGI_2"/>
    <property type="match status" value="1"/>
</dbReference>
<dbReference type="FunFam" id="3.40.50.10490:FF:000018">
    <property type="entry name" value="Glucose-6-phosphate isomerase"/>
    <property type="match status" value="1"/>
</dbReference>
<dbReference type="Gene3D" id="1.10.1390.10">
    <property type="match status" value="1"/>
</dbReference>
<dbReference type="Gene3D" id="3.40.50.10490">
    <property type="entry name" value="Glucose-6-phosphate isomerase like protein, domain 1"/>
    <property type="match status" value="2"/>
</dbReference>
<dbReference type="HAMAP" id="MF_00473">
    <property type="entry name" value="G6P_isomerase"/>
    <property type="match status" value="1"/>
</dbReference>
<dbReference type="InterPro" id="IPR001672">
    <property type="entry name" value="G6P_Isomerase"/>
</dbReference>
<dbReference type="InterPro" id="IPR023096">
    <property type="entry name" value="G6P_Isomerase_C"/>
</dbReference>
<dbReference type="InterPro" id="IPR018189">
    <property type="entry name" value="Phosphoglucose_isomerase_CS"/>
</dbReference>
<dbReference type="InterPro" id="IPR046348">
    <property type="entry name" value="SIS_dom_sf"/>
</dbReference>
<dbReference type="InterPro" id="IPR035476">
    <property type="entry name" value="SIS_PGI_1"/>
</dbReference>
<dbReference type="InterPro" id="IPR035482">
    <property type="entry name" value="SIS_PGI_2"/>
</dbReference>
<dbReference type="NCBIfam" id="NF001211">
    <property type="entry name" value="PRK00179.1"/>
    <property type="match status" value="1"/>
</dbReference>
<dbReference type="PANTHER" id="PTHR11469">
    <property type="entry name" value="GLUCOSE-6-PHOSPHATE ISOMERASE"/>
    <property type="match status" value="1"/>
</dbReference>
<dbReference type="PANTHER" id="PTHR11469:SF1">
    <property type="entry name" value="GLUCOSE-6-PHOSPHATE ISOMERASE"/>
    <property type="match status" value="1"/>
</dbReference>
<dbReference type="Pfam" id="PF00342">
    <property type="entry name" value="PGI"/>
    <property type="match status" value="1"/>
</dbReference>
<dbReference type="PRINTS" id="PR00662">
    <property type="entry name" value="G6PISOMERASE"/>
</dbReference>
<dbReference type="SUPFAM" id="SSF53697">
    <property type="entry name" value="SIS domain"/>
    <property type="match status" value="1"/>
</dbReference>
<dbReference type="PROSITE" id="PS00765">
    <property type="entry name" value="P_GLUCOSE_ISOMERASE_1"/>
    <property type="match status" value="1"/>
</dbReference>
<dbReference type="PROSITE" id="PS00174">
    <property type="entry name" value="P_GLUCOSE_ISOMERASE_2"/>
    <property type="match status" value="1"/>
</dbReference>
<dbReference type="PROSITE" id="PS51463">
    <property type="entry name" value="P_GLUCOSE_ISOMERASE_3"/>
    <property type="match status" value="1"/>
</dbReference>
<feature type="chain" id="PRO_1000125759" description="Glucose-6-phosphate isomerase">
    <location>
        <begin position="1"/>
        <end position="545"/>
    </location>
</feature>
<feature type="active site" description="Proton donor" evidence="1">
    <location>
        <position position="351"/>
    </location>
</feature>
<feature type="active site" evidence="1">
    <location>
        <position position="382"/>
    </location>
</feature>
<feature type="active site" evidence="1">
    <location>
        <position position="510"/>
    </location>
</feature>
<reference key="1">
    <citation type="submission" date="2008-02" db="EMBL/GenBank/DDBJ databases">
        <title>Complete sequence of Shewanella woodyi ATCC 51908.</title>
        <authorList>
            <consortium name="US DOE Joint Genome Institute"/>
            <person name="Copeland A."/>
            <person name="Lucas S."/>
            <person name="Lapidus A."/>
            <person name="Glavina del Rio T."/>
            <person name="Dalin E."/>
            <person name="Tice H."/>
            <person name="Bruce D."/>
            <person name="Goodwin L."/>
            <person name="Pitluck S."/>
            <person name="Sims D."/>
            <person name="Brettin T."/>
            <person name="Detter J.C."/>
            <person name="Han C."/>
            <person name="Kuske C.R."/>
            <person name="Schmutz J."/>
            <person name="Larimer F."/>
            <person name="Land M."/>
            <person name="Hauser L."/>
            <person name="Kyrpides N."/>
            <person name="Lykidis A."/>
            <person name="Zhao J.-S."/>
            <person name="Richardson P."/>
        </authorList>
    </citation>
    <scope>NUCLEOTIDE SEQUENCE [LARGE SCALE GENOMIC DNA]</scope>
    <source>
        <strain>ATCC 51908 / MS32</strain>
    </source>
</reference>
<keyword id="KW-0963">Cytoplasm</keyword>
<keyword id="KW-0312">Gluconeogenesis</keyword>
<keyword id="KW-0324">Glycolysis</keyword>
<keyword id="KW-0413">Isomerase</keyword>
<keyword id="KW-1185">Reference proteome</keyword>
<proteinExistence type="inferred from homology"/>